<proteinExistence type="inferred from homology"/>
<comment type="function">
    <text evidence="1">Lipoamide dehydrogenase is a component of the alpha-ketoacid dehydrogenase complexes.</text>
</comment>
<comment type="catalytic activity">
    <reaction>
        <text>N(6)-[(R)-dihydrolipoyl]-L-lysyl-[protein] + NAD(+) = N(6)-[(R)-lipoyl]-L-lysyl-[protein] + NADH + H(+)</text>
        <dbReference type="Rhea" id="RHEA:15045"/>
        <dbReference type="Rhea" id="RHEA-COMP:10474"/>
        <dbReference type="Rhea" id="RHEA-COMP:10475"/>
        <dbReference type="ChEBI" id="CHEBI:15378"/>
        <dbReference type="ChEBI" id="CHEBI:57540"/>
        <dbReference type="ChEBI" id="CHEBI:57945"/>
        <dbReference type="ChEBI" id="CHEBI:83099"/>
        <dbReference type="ChEBI" id="CHEBI:83100"/>
        <dbReference type="EC" id="1.8.1.4"/>
    </reaction>
</comment>
<comment type="cofactor">
    <cofactor evidence="1">
        <name>FAD</name>
        <dbReference type="ChEBI" id="CHEBI:57692"/>
    </cofactor>
    <text evidence="1">Binds 1 FAD per subunit.</text>
</comment>
<comment type="subunit">
    <text evidence="1">Homodimer.</text>
</comment>
<comment type="subcellular location">
    <subcellularLocation>
        <location evidence="1">Cytoplasm</location>
    </subcellularLocation>
</comment>
<comment type="miscellaneous">
    <text evidence="1">The active site is a redox-active disulfide bond.</text>
</comment>
<comment type="similarity">
    <text evidence="2">Belongs to the class-I pyridine nucleotide-disulfide oxidoreductase family.</text>
</comment>
<accession>Q89AQ8</accession>
<protein>
    <recommendedName>
        <fullName>Dihydrolipoyl dehydrogenase</fullName>
        <ecNumber>1.8.1.4</ecNumber>
    </recommendedName>
    <alternativeName>
        <fullName>Dihydrolipoamide dehydrogenase</fullName>
    </alternativeName>
    <alternativeName>
        <fullName>E3 component of pyruvate and 2-oxoglutarate dehydrogenases complexes</fullName>
    </alternativeName>
</protein>
<sequence>MISKKVDTQVVIIGSGPSGYSAAFRCSDLGLNVVLIEQYYSLGGVCLNVGCIPSKYLLHIAKVIKDVKKLSRIGISFEKLDINLKEIQCNQKKIIESFSSGISNLARKRNVRIIFGYAKFLDANSIFVQGEHDSYVVSFNKIVIATGSLSKKLSYIPYDDIRIWNSSFAVSIPSIPKKLLIIGGGIIGLEMATIYSALGSNVDIIDNSHDILPHLDRDVIDIFKRSVNHDYNIFFNSNVIKIVQEKNGLLVHIAENDNKNKRFELYDIILVAIGRVPNTDMLDISKVGLKTDNNGFIKVNEQFCTNIPNIYAIGDVIGQPMLAHKGTHEGHIVAEVISGKKHYFNPFVIPCVSYTEPEIAWVGITENEARKNNINYEVSSVLWNTLGRAVSSQCSEGVTKLIFDKKTNKIIGGCIVGSNAGELLGEISLAIEMGCDAEDLALTIHAHPTLYESINLSAQIFQGTITDLINKKIKK</sequence>
<reference key="1">
    <citation type="journal article" date="2003" name="Proc. Natl. Acad. Sci. U.S.A.">
        <title>Reductive genome evolution in Buchnera aphidicola.</title>
        <authorList>
            <person name="van Ham R.C.H.J."/>
            <person name="Kamerbeek J."/>
            <person name="Palacios C."/>
            <person name="Rausell C."/>
            <person name="Abascal F."/>
            <person name="Bastolla U."/>
            <person name="Fernandez J.M."/>
            <person name="Jimenez L."/>
            <person name="Postigo M."/>
            <person name="Silva F.J."/>
            <person name="Tamames J."/>
            <person name="Viguera E."/>
            <person name="Latorre A."/>
            <person name="Valencia A."/>
            <person name="Moran F."/>
            <person name="Moya A."/>
        </authorList>
    </citation>
    <scope>NUCLEOTIDE SEQUENCE [LARGE SCALE GENOMIC DNA]</scope>
    <source>
        <strain>Bp</strain>
    </source>
</reference>
<feature type="chain" id="PRO_0000068021" description="Dihydrolipoyl dehydrogenase">
    <location>
        <begin position="1"/>
        <end position="475"/>
    </location>
</feature>
<feature type="active site" description="Proton acceptor" evidence="1">
    <location>
        <position position="447"/>
    </location>
</feature>
<feature type="binding site" evidence="1">
    <location>
        <begin position="37"/>
        <end position="46"/>
    </location>
    <ligand>
        <name>FAD</name>
        <dbReference type="ChEBI" id="CHEBI:57692"/>
    </ligand>
</feature>
<feature type="binding site" evidence="1">
    <location>
        <position position="55"/>
    </location>
    <ligand>
        <name>FAD</name>
        <dbReference type="ChEBI" id="CHEBI:57692"/>
    </ligand>
</feature>
<feature type="binding site" evidence="1">
    <location>
        <position position="118"/>
    </location>
    <ligand>
        <name>FAD</name>
        <dbReference type="ChEBI" id="CHEBI:57692"/>
    </ligand>
</feature>
<feature type="binding site" evidence="1">
    <location>
        <begin position="183"/>
        <end position="187"/>
    </location>
    <ligand>
        <name>NAD(+)</name>
        <dbReference type="ChEBI" id="CHEBI:57540"/>
    </ligand>
</feature>
<feature type="binding site" evidence="1">
    <location>
        <position position="206"/>
    </location>
    <ligand>
        <name>NAD(+)</name>
        <dbReference type="ChEBI" id="CHEBI:57540"/>
    </ligand>
</feature>
<feature type="binding site" evidence="1">
    <location>
        <position position="239"/>
    </location>
    <ligand>
        <name>NAD(+)</name>
        <dbReference type="ChEBI" id="CHEBI:57540"/>
    </ligand>
</feature>
<feature type="binding site" evidence="1">
    <location>
        <begin position="272"/>
        <end position="275"/>
    </location>
    <ligand>
        <name>NAD(+)</name>
        <dbReference type="ChEBI" id="CHEBI:57540"/>
    </ligand>
</feature>
<feature type="binding site" evidence="1">
    <location>
        <position position="315"/>
    </location>
    <ligand>
        <name>FAD</name>
        <dbReference type="ChEBI" id="CHEBI:57692"/>
    </ligand>
</feature>
<feature type="binding site" evidence="1">
    <location>
        <position position="323"/>
    </location>
    <ligand>
        <name>FAD</name>
        <dbReference type="ChEBI" id="CHEBI:57692"/>
    </ligand>
</feature>
<feature type="disulfide bond" description="Redox-active" evidence="1">
    <location>
        <begin position="46"/>
        <end position="51"/>
    </location>
</feature>
<organism>
    <name type="scientific">Buchnera aphidicola subsp. Baizongia pistaciae (strain Bp)</name>
    <dbReference type="NCBI Taxonomy" id="224915"/>
    <lineage>
        <taxon>Bacteria</taxon>
        <taxon>Pseudomonadati</taxon>
        <taxon>Pseudomonadota</taxon>
        <taxon>Gammaproteobacteria</taxon>
        <taxon>Enterobacterales</taxon>
        <taxon>Erwiniaceae</taxon>
        <taxon>Buchnera</taxon>
    </lineage>
</organism>
<dbReference type="EC" id="1.8.1.4"/>
<dbReference type="EMBL" id="AE016826">
    <property type="protein sequence ID" value="AAO26923.1"/>
    <property type="molecule type" value="Genomic_DNA"/>
</dbReference>
<dbReference type="RefSeq" id="WP_011091324.1">
    <property type="nucleotide sequence ID" value="NC_004545.1"/>
</dbReference>
<dbReference type="SMR" id="Q89AQ8"/>
<dbReference type="STRING" id="224915.bbp_191"/>
<dbReference type="KEGG" id="bab:bbp_191"/>
<dbReference type="eggNOG" id="COG1249">
    <property type="taxonomic scope" value="Bacteria"/>
</dbReference>
<dbReference type="HOGENOM" id="CLU_016755_0_1_6"/>
<dbReference type="OrthoDB" id="9800167at2"/>
<dbReference type="Proteomes" id="UP000000601">
    <property type="component" value="Chromosome"/>
</dbReference>
<dbReference type="GO" id="GO:0005737">
    <property type="term" value="C:cytoplasm"/>
    <property type="evidence" value="ECO:0007669"/>
    <property type="project" value="UniProtKB-SubCell"/>
</dbReference>
<dbReference type="GO" id="GO:0004148">
    <property type="term" value="F:dihydrolipoyl dehydrogenase (NADH) activity"/>
    <property type="evidence" value="ECO:0007669"/>
    <property type="project" value="UniProtKB-EC"/>
</dbReference>
<dbReference type="GO" id="GO:0050660">
    <property type="term" value="F:flavin adenine dinucleotide binding"/>
    <property type="evidence" value="ECO:0007669"/>
    <property type="project" value="InterPro"/>
</dbReference>
<dbReference type="GO" id="GO:0006103">
    <property type="term" value="P:2-oxoglutarate metabolic process"/>
    <property type="evidence" value="ECO:0007669"/>
    <property type="project" value="TreeGrafter"/>
</dbReference>
<dbReference type="FunFam" id="3.30.390.30:FF:000001">
    <property type="entry name" value="Dihydrolipoyl dehydrogenase"/>
    <property type="match status" value="1"/>
</dbReference>
<dbReference type="Gene3D" id="3.30.390.30">
    <property type="match status" value="1"/>
</dbReference>
<dbReference type="Gene3D" id="3.50.50.60">
    <property type="entry name" value="FAD/NAD(P)-binding domain"/>
    <property type="match status" value="2"/>
</dbReference>
<dbReference type="InterPro" id="IPR050151">
    <property type="entry name" value="Class-I_Pyr_Nuc-Dis_Oxidored"/>
</dbReference>
<dbReference type="InterPro" id="IPR036188">
    <property type="entry name" value="FAD/NAD-bd_sf"/>
</dbReference>
<dbReference type="InterPro" id="IPR023753">
    <property type="entry name" value="FAD/NAD-binding_dom"/>
</dbReference>
<dbReference type="InterPro" id="IPR016156">
    <property type="entry name" value="FAD/NAD-linked_Rdtase_dimer_sf"/>
</dbReference>
<dbReference type="InterPro" id="IPR006258">
    <property type="entry name" value="Lipoamide_DH"/>
</dbReference>
<dbReference type="InterPro" id="IPR001100">
    <property type="entry name" value="Pyr_nuc-diS_OxRdtase"/>
</dbReference>
<dbReference type="InterPro" id="IPR004099">
    <property type="entry name" value="Pyr_nucl-diS_OxRdtase_dimer"/>
</dbReference>
<dbReference type="InterPro" id="IPR012999">
    <property type="entry name" value="Pyr_OxRdtase_I_AS"/>
</dbReference>
<dbReference type="NCBIfam" id="TIGR01350">
    <property type="entry name" value="lipoamide_DH"/>
    <property type="match status" value="1"/>
</dbReference>
<dbReference type="PANTHER" id="PTHR22912:SF160">
    <property type="entry name" value="DIHYDROLIPOYL DEHYDROGENASE"/>
    <property type="match status" value="1"/>
</dbReference>
<dbReference type="PANTHER" id="PTHR22912">
    <property type="entry name" value="DISULFIDE OXIDOREDUCTASE"/>
    <property type="match status" value="1"/>
</dbReference>
<dbReference type="Pfam" id="PF07992">
    <property type="entry name" value="Pyr_redox_2"/>
    <property type="match status" value="1"/>
</dbReference>
<dbReference type="Pfam" id="PF02852">
    <property type="entry name" value="Pyr_redox_dim"/>
    <property type="match status" value="1"/>
</dbReference>
<dbReference type="PIRSF" id="PIRSF000350">
    <property type="entry name" value="Mercury_reductase_MerA"/>
    <property type="match status" value="1"/>
</dbReference>
<dbReference type="PRINTS" id="PR00368">
    <property type="entry name" value="FADPNR"/>
</dbReference>
<dbReference type="PRINTS" id="PR00411">
    <property type="entry name" value="PNDRDTASEI"/>
</dbReference>
<dbReference type="SUPFAM" id="SSF51905">
    <property type="entry name" value="FAD/NAD(P)-binding domain"/>
    <property type="match status" value="1"/>
</dbReference>
<dbReference type="SUPFAM" id="SSF55424">
    <property type="entry name" value="FAD/NAD-linked reductases, dimerisation (C-terminal) domain"/>
    <property type="match status" value="1"/>
</dbReference>
<dbReference type="PROSITE" id="PS00076">
    <property type="entry name" value="PYRIDINE_REDOX_1"/>
    <property type="match status" value="1"/>
</dbReference>
<evidence type="ECO:0000250" key="1"/>
<evidence type="ECO:0000305" key="2"/>
<name>DLDH_BUCBP</name>
<gene>
    <name type="primary">lpdA</name>
    <name type="ordered locus">bbp_191</name>
</gene>
<keyword id="KW-0963">Cytoplasm</keyword>
<keyword id="KW-1015">Disulfide bond</keyword>
<keyword id="KW-0274">FAD</keyword>
<keyword id="KW-0285">Flavoprotein</keyword>
<keyword id="KW-0520">NAD</keyword>
<keyword id="KW-0560">Oxidoreductase</keyword>
<keyword id="KW-0676">Redox-active center</keyword>
<keyword id="KW-1185">Reference proteome</keyword>